<feature type="chain" id="PRO_0000423672" description="Tobamovirus multiplication protein 1">
    <location>
        <begin position="1"/>
        <end position="288"/>
    </location>
</feature>
<feature type="topological domain" description="Extracellular" evidence="2">
    <location>
        <begin position="1"/>
        <end position="33"/>
    </location>
</feature>
<feature type="transmembrane region" description="Helical" evidence="2">
    <location>
        <begin position="34"/>
        <end position="54"/>
    </location>
</feature>
<feature type="topological domain" description="Cytoplasmic" evidence="2">
    <location>
        <begin position="55"/>
        <end position="75"/>
    </location>
</feature>
<feature type="transmembrane region" description="Helical" evidence="2">
    <location>
        <begin position="76"/>
        <end position="96"/>
    </location>
</feature>
<feature type="topological domain" description="Extracellular" evidence="2">
    <location>
        <begin position="97"/>
        <end position="101"/>
    </location>
</feature>
<feature type="transmembrane region" description="Helical" evidence="2">
    <location>
        <begin position="102"/>
        <end position="122"/>
    </location>
</feature>
<feature type="topological domain" description="Cytoplasmic" evidence="2">
    <location>
        <begin position="123"/>
        <end position="139"/>
    </location>
</feature>
<feature type="transmembrane region" description="Helical" evidence="2">
    <location>
        <begin position="140"/>
        <end position="160"/>
    </location>
</feature>
<feature type="topological domain" description="Extracellular" evidence="2">
    <location>
        <begin position="161"/>
        <end position="169"/>
    </location>
</feature>
<feature type="transmembrane region" description="Helical" evidence="2">
    <location>
        <begin position="170"/>
        <end position="190"/>
    </location>
</feature>
<feature type="topological domain" description="Cytoplasmic" evidence="2">
    <location>
        <begin position="191"/>
        <end position="217"/>
    </location>
</feature>
<feature type="transmembrane region" description="Helical" evidence="2">
    <location>
        <begin position="218"/>
        <end position="238"/>
    </location>
</feature>
<feature type="topological domain" description="Extracellular" evidence="2">
    <location>
        <begin position="239"/>
        <end position="250"/>
    </location>
</feature>
<feature type="transmembrane region" description="Helical" evidence="2">
    <location>
        <begin position="251"/>
        <end position="271"/>
    </location>
</feature>
<feature type="topological domain" description="Cytoplasmic" evidence="2">
    <location>
        <begin position="272"/>
        <end position="288"/>
    </location>
</feature>
<feature type="glycosylation site" description="N-linked (GlcNAc...) asparagine" evidence="1">
    <location>
        <position position="25"/>
    </location>
</feature>
<feature type="glycosylation site" description="N-linked (GlcNAc...) asparagine" evidence="2">
    <location>
        <position position="165"/>
    </location>
</feature>
<protein>
    <recommendedName>
        <fullName>Tobamovirus multiplication protein 1</fullName>
        <shortName>NtTOM1</shortName>
    </recommendedName>
</protein>
<dbReference type="EMBL" id="AB193039">
    <property type="protein sequence ID" value="BAE43836.1"/>
    <property type="molecule type" value="mRNA"/>
</dbReference>
<dbReference type="SMR" id="Q402F4"/>
<dbReference type="STRING" id="4097.Q402F4"/>
<dbReference type="GlyCosmos" id="Q402F4">
    <property type="glycosylation" value="2 sites, No reported glycans"/>
</dbReference>
<dbReference type="PaxDb" id="4097-Q402F4"/>
<dbReference type="PhylomeDB" id="Q402F4"/>
<dbReference type="Proteomes" id="UP000084051">
    <property type="component" value="Unplaced"/>
</dbReference>
<dbReference type="GO" id="GO:0009705">
    <property type="term" value="C:plant-type vacuole membrane"/>
    <property type="evidence" value="ECO:0000314"/>
    <property type="project" value="UniProtKB"/>
</dbReference>
<dbReference type="GO" id="GO:0046786">
    <property type="term" value="P:viral replication complex formation and maintenance"/>
    <property type="evidence" value="ECO:0000314"/>
    <property type="project" value="UniProtKB"/>
</dbReference>
<dbReference type="InterPro" id="IPR040226">
    <property type="entry name" value="THH1/TOM1/TOM3"/>
</dbReference>
<dbReference type="InterPro" id="IPR009457">
    <property type="entry name" value="THH1/TOM1/TOM3_dom"/>
</dbReference>
<dbReference type="PANTHER" id="PTHR31142:SF1">
    <property type="entry name" value="TOBAMOVIRUS MULTIPLICATION PROTEIN 1"/>
    <property type="match status" value="1"/>
</dbReference>
<dbReference type="PANTHER" id="PTHR31142">
    <property type="entry name" value="TOBAMOVIRUS MULTIPLICATION PROTEIN 1-LIKE ISOFORM X1"/>
    <property type="match status" value="1"/>
</dbReference>
<dbReference type="Pfam" id="PF06454">
    <property type="entry name" value="THH1_TOM1-3_dom"/>
    <property type="match status" value="1"/>
</dbReference>
<proteinExistence type="evidence at protein level"/>
<keyword id="KW-0325">Glycoprotein</keyword>
<keyword id="KW-0945">Host-virus interaction</keyword>
<keyword id="KW-0472">Membrane</keyword>
<keyword id="KW-1185">Reference proteome</keyword>
<keyword id="KW-0812">Transmembrane</keyword>
<keyword id="KW-1133">Transmembrane helix</keyword>
<keyword id="KW-0926">Vacuole</keyword>
<comment type="function">
    <text evidence="4">Necessary for the efficient intracellular multiplication of tobamoviruses, probably being a membrane anchor promoting the formation of the replication complex.</text>
</comment>
<comment type="subunit">
    <text evidence="3">Constituent of tobamovirus replication complex. Interacts with TOM2A and with the helicase domain of tobamovirus-encoded replication proteins.</text>
</comment>
<comment type="subcellular location">
    <subcellularLocation>
        <location evidence="3">Vacuole membrane</location>
        <topology evidence="3">Multi-pass membrane protein</topology>
    </subcellularLocation>
</comment>
<comment type="disruption phenotype">
    <text evidence="4">Reduced efficiency of intracellular multiplication of tobamoviruses (e.g. TMV-L, ToMV, PMMoV, and TMGMV), characterized by a reduced accumulation of viral coat protein (CP) and reduced amplification of TMV-related RNAs.</text>
</comment>
<comment type="biotechnology">
    <text evidence="4">TOM1 inhibition via RNA interference constitutes a useful method for generating tobamovirus-resistant plants.</text>
</comment>
<comment type="similarity">
    <text evidence="5">Belongs to the plant tobamovirus multiplication TOM1 protein family.</text>
</comment>
<evidence type="ECO:0000250" key="1"/>
<evidence type="ECO:0000255" key="2"/>
<evidence type="ECO:0000269" key="3">
    <source>
    </source>
</evidence>
<evidence type="ECO:0000269" key="4">
    <source>
    </source>
</evidence>
<evidence type="ECO:0000305" key="5"/>
<reference key="1">
    <citation type="journal article" date="2005" name="FEBS Lett.">
        <title>Tobamovirus-resistant tobacco generated by RNA interference directed against host genes.</title>
        <authorList>
            <person name="Asano M."/>
            <person name="Satoh R."/>
            <person name="Mochizuki A."/>
            <person name="Tsuda S."/>
            <person name="Yamanaka T."/>
            <person name="Nishiguchi M."/>
            <person name="Hirai K."/>
            <person name="Meshi T."/>
            <person name="Naito S."/>
            <person name="Ishikawa M."/>
        </authorList>
    </citation>
    <scope>NUCLEOTIDE SEQUENCE [MRNA]</scope>
    <scope>FUNCTION</scope>
    <scope>DISRUPTION PHENOTYPE</scope>
    <scope>BIOTECHNOLOGY</scope>
    <source>
        <strain>cv. Samsun</strain>
    </source>
</reference>
<reference key="2">
    <citation type="journal article" date="2003" name="EMBO J.">
        <title>Subcellular localization of host and viral proteins associated with tobamovirus RNA replication.</title>
        <authorList>
            <person name="Hagiwara Y."/>
            <person name="Komoda K."/>
            <person name="Yamanaka T."/>
            <person name="Tamai A."/>
            <person name="Meshi T."/>
            <person name="Funada R."/>
            <person name="Tsuchiya T."/>
            <person name="Naito S."/>
            <person name="Ishikawa M."/>
        </authorList>
    </citation>
    <scope>SUBCELLULAR LOCATION</scope>
    <scope>SUBUNIT</scope>
    <source>
        <strain>cv. Bright Yellow 2</strain>
    </source>
</reference>
<gene>
    <name type="primary">TOM1</name>
</gene>
<sequence>MTRLPLGSSSIDIAGPTTNWWDQINESVQWQDGIFYSLCASYALVSAVALIQLIRIELRVPEYGWTTQKVFHLMNFVVNGVRAIVFGFHKQVFLFHPKVLSLAILDLPGLLFFSTFTLLVLFWAEIYHQARSLPTDKLRISYISINGAIYFIQACIWVYLWSNDNSTVEFIGKIFIAVVSFIAALGFLLYGGRLFLMLRRFPIESKGRRKKLHEVGSVTAICFTCFLISCFVVVLSAFDPDASLDVLDHPVLNLIYYLLVEILPSALVLYILRKLPPKRVSAQYHPIS</sequence>
<accession>Q402F4</accession>
<name>TOM1_TOBAC</name>
<organism>
    <name type="scientific">Nicotiana tabacum</name>
    <name type="common">Common tobacco</name>
    <dbReference type="NCBI Taxonomy" id="4097"/>
    <lineage>
        <taxon>Eukaryota</taxon>
        <taxon>Viridiplantae</taxon>
        <taxon>Streptophyta</taxon>
        <taxon>Embryophyta</taxon>
        <taxon>Tracheophyta</taxon>
        <taxon>Spermatophyta</taxon>
        <taxon>Magnoliopsida</taxon>
        <taxon>eudicotyledons</taxon>
        <taxon>Gunneridae</taxon>
        <taxon>Pentapetalae</taxon>
        <taxon>asterids</taxon>
        <taxon>lamiids</taxon>
        <taxon>Solanales</taxon>
        <taxon>Solanaceae</taxon>
        <taxon>Nicotianoideae</taxon>
        <taxon>Nicotianeae</taxon>
        <taxon>Nicotiana</taxon>
    </lineage>
</organism>